<evidence type="ECO:0000255" key="1"/>
<evidence type="ECO:0000255" key="2">
    <source>
        <dbReference type="PROSITE-ProRule" id="PRU00174"/>
    </source>
</evidence>
<evidence type="ECO:0000305" key="3"/>
<feature type="signal peptide" evidence="1">
    <location>
        <begin position="1"/>
        <end position="30"/>
    </location>
</feature>
<feature type="chain" id="PRO_0000013366" description="Hemolysin ahh1">
    <location>
        <begin position="31"/>
        <end position="621"/>
    </location>
</feature>
<feature type="domain" description="Ricin B-type lectin" evidence="2">
    <location>
        <begin position="491"/>
        <end position="610"/>
    </location>
</feature>
<feature type="sequence conflict" description="In Ref. 2." evidence="3" ref="2">
    <original>R</original>
    <variation>G</variation>
    <location>
        <position position="64"/>
    </location>
</feature>
<feature type="sequence conflict" description="In Ref. 2." evidence="3" ref="2">
    <original>S</original>
    <variation>I</variation>
    <location>
        <position position="98"/>
    </location>
</feature>
<feature type="sequence conflict" description="In Ref. 2." evidence="3" ref="2">
    <original>T</original>
    <variation>A</variation>
    <location>
        <position position="103"/>
    </location>
</feature>
<feature type="sequence conflict" description="In Ref. 2." evidence="3" ref="2">
    <original>V</original>
    <variation>L</variation>
    <location>
        <position position="145"/>
    </location>
</feature>
<feature type="sequence conflict" description="In Ref. 2." evidence="3" ref="2">
    <original>KR</original>
    <variation>NG</variation>
    <location>
        <begin position="157"/>
        <end position="158"/>
    </location>
</feature>
<feature type="sequence conflict" description="In Ref. 2." evidence="3" ref="2">
    <original>G</original>
    <variation>A</variation>
    <location>
        <position position="230"/>
    </location>
</feature>
<feature type="sequence conflict" description="In Ref. 2." evidence="3" ref="2">
    <original>T</original>
    <variation>S</variation>
    <location>
        <position position="259"/>
    </location>
</feature>
<feature type="sequence conflict" description="In Ref. 2." evidence="3" ref="2">
    <original>SI</original>
    <variation>TT</variation>
    <location>
        <begin position="289"/>
        <end position="290"/>
    </location>
</feature>
<feature type="sequence conflict" description="In Ref. 2." evidence="3" ref="2">
    <original>T</original>
    <variation>A</variation>
    <location>
        <position position="473"/>
    </location>
</feature>
<feature type="sequence conflict" description="In Ref. 2." evidence="3" ref="2">
    <original>C</original>
    <variation>F</variation>
    <location>
        <position position="518"/>
    </location>
</feature>
<feature type="sequence conflict" description="In Ref. 2." evidence="3" ref="2">
    <original>F</original>
    <variation>S</variation>
    <location>
        <position position="527"/>
    </location>
</feature>
<feature type="sequence conflict" description="In Ref. 2." evidence="3" ref="2">
    <original>Q</original>
    <variation>E</variation>
    <location>
        <position position="531"/>
    </location>
</feature>
<feature type="sequence conflict" description="In Ref. 2." evidence="3" ref="2">
    <original>R</original>
    <variation>L</variation>
    <location>
        <position position="542"/>
    </location>
</feature>
<feature type="sequence conflict" description="In Ref. 2." evidence="3" ref="2">
    <original>G</original>
    <variation>V</variation>
    <location>
        <position position="583"/>
    </location>
</feature>
<proteinExistence type="inferred from homology"/>
<protein>
    <recommendedName>
        <fullName>Hemolysin ahh1</fullName>
    </recommendedName>
</protein>
<reference key="1">
    <citation type="journal article" date="2006" name="J. Bacteriol.">
        <title>Genome sequence of Aeromonas hydrophila ATCC 7966T: jack of all trades.</title>
        <authorList>
            <person name="Seshadri R."/>
            <person name="Joseph S.W."/>
            <person name="Chopra A.K."/>
            <person name="Sha J."/>
            <person name="Shaw J."/>
            <person name="Graf J."/>
            <person name="Haft D.H."/>
            <person name="Wu M."/>
            <person name="Ren Q."/>
            <person name="Rosovitz M.J."/>
            <person name="Madupu R."/>
            <person name="Tallon L."/>
            <person name="Kim M."/>
            <person name="Jin S."/>
            <person name="Vuong H."/>
            <person name="Stine O.C."/>
            <person name="Ali A."/>
            <person name="Horneman A.J."/>
            <person name="Heidelberg J.F."/>
        </authorList>
    </citation>
    <scope>NUCLEOTIDE SEQUENCE [LARGE SCALE GENOMIC DNA]</scope>
    <source>
        <strain>ATCC 7966 / DSM 30187 / BCRC 13018 / CCUG 14551 / JCM 1027 / KCTC 2358 / NCIMB 9240 / NCTC 8049</strain>
    </source>
</reference>
<reference key="2">
    <citation type="journal article" date="1991" name="Microb. Pathog.">
        <title>Nucleotide sequence and expression of an extracellular hemolysin gene of Aeromonas hydrophila.</title>
        <authorList>
            <person name="Hirono I."/>
            <person name="Aoki T."/>
        </authorList>
    </citation>
    <scope>NUCLEOTIDE SEQUENCE [GENOMIC DNA] OF 43-621</scope>
</reference>
<keyword id="KW-0204">Cytolysis</keyword>
<keyword id="KW-0354">Hemolysis</keyword>
<keyword id="KW-0430">Lectin</keyword>
<keyword id="KW-1185">Reference proteome</keyword>
<keyword id="KW-0732">Signal</keyword>
<keyword id="KW-0800">Toxin</keyword>
<keyword id="KW-0843">Virulence</keyword>
<dbReference type="EMBL" id="CP000462">
    <property type="protein sequence ID" value="ABK36614.1"/>
    <property type="molecule type" value="Genomic_DNA"/>
</dbReference>
<dbReference type="PIR" id="A61372">
    <property type="entry name" value="A61372"/>
</dbReference>
<dbReference type="RefSeq" id="WP_011705409.1">
    <property type="nucleotide sequence ID" value="NC_008570.1"/>
</dbReference>
<dbReference type="RefSeq" id="YP_856050.1">
    <property type="nucleotide sequence ID" value="NC_008570.1"/>
</dbReference>
<dbReference type="SMR" id="P55870"/>
<dbReference type="STRING" id="380703.AHA_1512"/>
<dbReference type="TCDB" id="1.C.14.1.2">
    <property type="family name" value="the cytohemolysin (chl) family"/>
</dbReference>
<dbReference type="EnsemblBacteria" id="ABK36614">
    <property type="protein sequence ID" value="ABK36614"/>
    <property type="gene ID" value="AHA_1512"/>
</dbReference>
<dbReference type="GeneID" id="4487585"/>
<dbReference type="KEGG" id="aha:AHA_1512"/>
<dbReference type="PATRIC" id="fig|380703.7.peg.1525"/>
<dbReference type="eggNOG" id="ENOG502ZBG7">
    <property type="taxonomic scope" value="Bacteria"/>
</dbReference>
<dbReference type="HOGENOM" id="CLU_439829_0_0_6"/>
<dbReference type="OrthoDB" id="6194540at2"/>
<dbReference type="Proteomes" id="UP000000756">
    <property type="component" value="Chromosome"/>
</dbReference>
<dbReference type="GO" id="GO:0005576">
    <property type="term" value="C:extracellular region"/>
    <property type="evidence" value="ECO:0007669"/>
    <property type="project" value="InterPro"/>
</dbReference>
<dbReference type="GO" id="GO:0030246">
    <property type="term" value="F:carbohydrate binding"/>
    <property type="evidence" value="ECO:0007669"/>
    <property type="project" value="UniProtKB-KW"/>
</dbReference>
<dbReference type="GO" id="GO:0090729">
    <property type="term" value="F:toxin activity"/>
    <property type="evidence" value="ECO:0007669"/>
    <property type="project" value="UniProtKB-KW"/>
</dbReference>
<dbReference type="GO" id="GO:0051715">
    <property type="term" value="P:cytolysis in another organism"/>
    <property type="evidence" value="ECO:0007669"/>
    <property type="project" value="InterPro"/>
</dbReference>
<dbReference type="CDD" id="cd23423">
    <property type="entry name" value="beta-trefoil_Ricin_hemolysin"/>
    <property type="match status" value="1"/>
</dbReference>
<dbReference type="Gene3D" id="3.30.110.130">
    <property type="entry name" value="Hemolytic toxin, N-terminal domain"/>
    <property type="match status" value="1"/>
</dbReference>
<dbReference type="Gene3D" id="2.70.240.20">
    <property type="entry name" value="Leukocidin/Hemolysin toxin, cytolysin domain"/>
    <property type="match status" value="1"/>
</dbReference>
<dbReference type="Gene3D" id="6.20.40.20">
    <property type="entry name" value="Leukocidin/Hemolysin toxin, pre-stem domain"/>
    <property type="match status" value="1"/>
</dbReference>
<dbReference type="InterPro" id="IPR022220">
    <property type="entry name" value="Hemolysin_N"/>
</dbReference>
<dbReference type="InterPro" id="IPR043080">
    <property type="entry name" value="Hemolysin_N_sf"/>
</dbReference>
<dbReference type="InterPro" id="IPR044883">
    <property type="entry name" value="Hemolysin_pre-stem_dom_sf"/>
</dbReference>
<dbReference type="InterPro" id="IPR016183">
    <property type="entry name" value="Leukocidin/Hemolysin_toxin"/>
</dbReference>
<dbReference type="InterPro" id="IPR036435">
    <property type="entry name" value="Leukocidin/porin_MspA_sf"/>
</dbReference>
<dbReference type="InterPro" id="IPR035992">
    <property type="entry name" value="Ricin_B-like_lectins"/>
</dbReference>
<dbReference type="InterPro" id="IPR000772">
    <property type="entry name" value="Ricin_B_lectin"/>
</dbReference>
<dbReference type="Pfam" id="PF12563">
    <property type="entry name" value="Hemolysin_N"/>
    <property type="match status" value="1"/>
</dbReference>
<dbReference type="Pfam" id="PF07968">
    <property type="entry name" value="Leukocidin"/>
    <property type="match status" value="1"/>
</dbReference>
<dbReference type="SMART" id="SM00458">
    <property type="entry name" value="RICIN"/>
    <property type="match status" value="1"/>
</dbReference>
<dbReference type="SUPFAM" id="SSF56959">
    <property type="entry name" value="Leukocidin-like"/>
    <property type="match status" value="1"/>
</dbReference>
<dbReference type="SUPFAM" id="SSF50370">
    <property type="entry name" value="Ricin B-like lectins"/>
    <property type="match status" value="1"/>
</dbReference>
<dbReference type="PROSITE" id="PS50231">
    <property type="entry name" value="RICIN_B_LECTIN"/>
    <property type="match status" value="1"/>
</dbReference>
<accession>P55870</accession>
<accession>A0KIE9</accession>
<organism>
    <name type="scientific">Aeromonas hydrophila subsp. hydrophila (strain ATCC 7966 / DSM 30187 / BCRC 13018 / CCUG 14551 / JCM 1027 / KCTC 2358 / NCIMB 9240 / NCTC 8049)</name>
    <dbReference type="NCBI Taxonomy" id="380703"/>
    <lineage>
        <taxon>Bacteria</taxon>
        <taxon>Pseudomonadati</taxon>
        <taxon>Pseudomonadota</taxon>
        <taxon>Gammaproteobacteria</taxon>
        <taxon>Aeromonadales</taxon>
        <taxon>Aeromonadaceae</taxon>
        <taxon>Aeromonas</taxon>
    </lineage>
</organism>
<sequence>MKNKKPRKFITQAPTLSLLALALLAGSVQAEDIGERTDQGTAMLASLQSEQGLIYLNADVWLKRQGATPLMTRDQLRERVLARGERLFIDFSAVTDQSERQQTRKAMEQLAGISFDADWVLVSGYKGELLFTPLGGVDDPAFYQVMERVESLEGQGKRHKRSLTQPPAAEAGLPHVAFYLNVNRKISDAECTFPRSRTWSRGDRLFCDSPNISLVYRVNLERSLQFGNTGSATPDAKIVRISLDEESAGAGIQLNEDLTWSENIADYLLLDGWARDYATDAIAQDYRFSIEASNTKAAVLKSLPTNLNSKYEHREISGFEVGVTGGVEVNKDGPKAKLEASAKFSQQRQLAYNTQDYRVERSAPSAQKVSFSWVRDQYATAESLLSSKTATVWGMGYDVDHNRIQPLSYKGFVPNLDVIYKAAPDETGSTEFKIDSSVNIRPIYTGIYKHYYVVGAHVSFQGFEDTDKRRRVTASTSFKVDWNHPVFTGGRPVNLQLGGFDNRCLSADANHGLSAVTCDETSAAQSFIYDQYGRYVSAQDTRRCLDGNNLGQLQSCSLSLGQRWEWKADSDALSNLSAHQLLGHDKQSGALGLYDENGNPQNVSVRTLTSYTRIFGPPASH</sequence>
<gene>
    <name type="primary">ahh1</name>
    <name type="ordered locus">AHA_1512</name>
</gene>
<name>HLY1_AERHH</name>
<comment type="function">
    <text>Bacterial hemolysins are exotoxins that attack blood cell membranes and cause cell rupture by mechanisms not clearly defined.</text>
</comment>
<comment type="similarity">
    <text evidence="3">Belongs to the HlyA hemolysin family.</text>
</comment>
<comment type="sequence caution" evidence="3">
    <conflict type="frameshift" ref="2"/>
</comment>